<dbReference type="EMBL" id="CP000554">
    <property type="protein sequence ID" value="ABM77230.1"/>
    <property type="molecule type" value="Genomic_DNA"/>
</dbReference>
<dbReference type="RefSeq" id="WP_011825154.1">
    <property type="nucleotide sequence ID" value="NC_008820.1"/>
</dbReference>
<dbReference type="SMR" id="A2C6X0"/>
<dbReference type="STRING" id="59922.P9303_04781"/>
<dbReference type="KEGG" id="pmf:P9303_04781"/>
<dbReference type="HOGENOM" id="CLU_041018_2_4_3"/>
<dbReference type="BioCyc" id="PMAR59922:G1G80-440-MONOMER"/>
<dbReference type="Proteomes" id="UP000002274">
    <property type="component" value="Chromosome"/>
</dbReference>
<dbReference type="GO" id="GO:0031676">
    <property type="term" value="C:plasma membrane-derived thylakoid membrane"/>
    <property type="evidence" value="ECO:0007669"/>
    <property type="project" value="UniProtKB-SubCell"/>
</dbReference>
<dbReference type="GO" id="GO:0045259">
    <property type="term" value="C:proton-transporting ATP synthase complex"/>
    <property type="evidence" value="ECO:0007669"/>
    <property type="project" value="UniProtKB-KW"/>
</dbReference>
<dbReference type="GO" id="GO:0046933">
    <property type="term" value="F:proton-transporting ATP synthase activity, rotational mechanism"/>
    <property type="evidence" value="ECO:0007669"/>
    <property type="project" value="UniProtKB-UniRule"/>
</dbReference>
<dbReference type="CDD" id="cd00310">
    <property type="entry name" value="ATP-synt_Fo_a_6"/>
    <property type="match status" value="1"/>
</dbReference>
<dbReference type="FunFam" id="1.20.120.220:FF:000001">
    <property type="entry name" value="ATP synthase subunit a, chloroplastic"/>
    <property type="match status" value="1"/>
</dbReference>
<dbReference type="Gene3D" id="1.20.120.220">
    <property type="entry name" value="ATP synthase, F0 complex, subunit A"/>
    <property type="match status" value="1"/>
</dbReference>
<dbReference type="HAMAP" id="MF_01393">
    <property type="entry name" value="ATP_synth_a_bact"/>
    <property type="match status" value="1"/>
</dbReference>
<dbReference type="InterPro" id="IPR045082">
    <property type="entry name" value="ATP_syn_F0_a_bact/chloroplast"/>
</dbReference>
<dbReference type="InterPro" id="IPR000568">
    <property type="entry name" value="ATP_synth_F0_asu"/>
</dbReference>
<dbReference type="InterPro" id="IPR023011">
    <property type="entry name" value="ATP_synth_F0_asu_AS"/>
</dbReference>
<dbReference type="InterPro" id="IPR035908">
    <property type="entry name" value="F0_ATP_A_sf"/>
</dbReference>
<dbReference type="NCBIfam" id="TIGR01131">
    <property type="entry name" value="ATP_synt_6_or_A"/>
    <property type="match status" value="1"/>
</dbReference>
<dbReference type="PANTHER" id="PTHR42823">
    <property type="entry name" value="ATP SYNTHASE SUBUNIT A, CHLOROPLASTIC"/>
    <property type="match status" value="1"/>
</dbReference>
<dbReference type="PANTHER" id="PTHR42823:SF3">
    <property type="entry name" value="ATP SYNTHASE SUBUNIT A, CHLOROPLASTIC"/>
    <property type="match status" value="1"/>
</dbReference>
<dbReference type="Pfam" id="PF00119">
    <property type="entry name" value="ATP-synt_A"/>
    <property type="match status" value="1"/>
</dbReference>
<dbReference type="PRINTS" id="PR00123">
    <property type="entry name" value="ATPASEA"/>
</dbReference>
<dbReference type="SUPFAM" id="SSF81336">
    <property type="entry name" value="F1F0 ATP synthase subunit A"/>
    <property type="match status" value="1"/>
</dbReference>
<dbReference type="PROSITE" id="PS00449">
    <property type="entry name" value="ATPASE_A"/>
    <property type="match status" value="1"/>
</dbReference>
<sequence>MGFLPIALPFAELEVGQHLYWQIGNLQLHGQVFLTSWIVIGAILALVVVGTRKMERDPHGVQNLLEFLWDYIRDLARTQIGEKAYRDWMPFIGTLFLFIFVSNWGGSLVPWKLIHLPSGELGAPTADINTTVALALLVSLSYFYAGLSRKGLRYFEYYVHPTPIMIPFKIVEDFTKPLSLSFRLFGNILADELVVAVLVFLVPLFLPVPVMFLGLFTSAIQALIFATLAAYYIGEAVEEHH</sequence>
<evidence type="ECO:0000255" key="1">
    <source>
        <dbReference type="HAMAP-Rule" id="MF_01393"/>
    </source>
</evidence>
<name>ATP6_PROM3</name>
<comment type="function">
    <text evidence="1">Key component of the proton channel; it plays a direct role in the translocation of protons across the membrane.</text>
</comment>
<comment type="subunit">
    <text evidence="1">F-type ATPases have 2 components, CF(1) - the catalytic core - and CF(0) - the membrane proton channel. CF(1) has five subunits: alpha(3), beta(3), gamma(1), delta(1), epsilon(1). CF(0) has four main subunits: a, b, b' and c.</text>
</comment>
<comment type="subcellular location">
    <subcellularLocation>
        <location evidence="1">Cellular thylakoid membrane</location>
        <topology evidence="1">Multi-pass membrane protein</topology>
    </subcellularLocation>
</comment>
<comment type="similarity">
    <text evidence="1">Belongs to the ATPase A chain family.</text>
</comment>
<organism>
    <name type="scientific">Prochlorococcus marinus (strain MIT 9303)</name>
    <dbReference type="NCBI Taxonomy" id="59922"/>
    <lineage>
        <taxon>Bacteria</taxon>
        <taxon>Bacillati</taxon>
        <taxon>Cyanobacteriota</taxon>
        <taxon>Cyanophyceae</taxon>
        <taxon>Synechococcales</taxon>
        <taxon>Prochlorococcaceae</taxon>
        <taxon>Prochlorococcus</taxon>
    </lineage>
</organism>
<proteinExistence type="inferred from homology"/>
<feature type="chain" id="PRO_0000362379" description="ATP synthase subunit a">
    <location>
        <begin position="1"/>
        <end position="241"/>
    </location>
</feature>
<feature type="transmembrane region" description="Helical" evidence="1">
    <location>
        <begin position="30"/>
        <end position="50"/>
    </location>
</feature>
<feature type="transmembrane region" description="Helical" evidence="1">
    <location>
        <begin position="91"/>
        <end position="111"/>
    </location>
</feature>
<feature type="transmembrane region" description="Helical" evidence="1">
    <location>
        <begin position="128"/>
        <end position="148"/>
    </location>
</feature>
<feature type="transmembrane region" description="Helical" evidence="1">
    <location>
        <begin position="193"/>
        <end position="213"/>
    </location>
</feature>
<feature type="transmembrane region" description="Helical" evidence="1">
    <location>
        <begin position="214"/>
        <end position="234"/>
    </location>
</feature>
<accession>A2C6X0</accession>
<gene>
    <name evidence="1" type="primary">atpB</name>
    <name evidence="1" type="synonym">atpI</name>
    <name type="ordered locus">P9303_04781</name>
</gene>
<keyword id="KW-0066">ATP synthesis</keyword>
<keyword id="KW-0138">CF(0)</keyword>
<keyword id="KW-0375">Hydrogen ion transport</keyword>
<keyword id="KW-0406">Ion transport</keyword>
<keyword id="KW-0472">Membrane</keyword>
<keyword id="KW-0793">Thylakoid</keyword>
<keyword id="KW-0812">Transmembrane</keyword>
<keyword id="KW-1133">Transmembrane helix</keyword>
<keyword id="KW-0813">Transport</keyword>
<protein>
    <recommendedName>
        <fullName evidence="1">ATP synthase subunit a</fullName>
    </recommendedName>
    <alternativeName>
        <fullName evidence="1">ATP synthase F0 sector subunit a</fullName>
    </alternativeName>
    <alternativeName>
        <fullName evidence="1">F-ATPase subunit 6</fullName>
    </alternativeName>
</protein>
<reference key="1">
    <citation type="journal article" date="2007" name="PLoS Genet.">
        <title>Patterns and implications of gene gain and loss in the evolution of Prochlorococcus.</title>
        <authorList>
            <person name="Kettler G.C."/>
            <person name="Martiny A.C."/>
            <person name="Huang K."/>
            <person name="Zucker J."/>
            <person name="Coleman M.L."/>
            <person name="Rodrigue S."/>
            <person name="Chen F."/>
            <person name="Lapidus A."/>
            <person name="Ferriera S."/>
            <person name="Johnson J."/>
            <person name="Steglich C."/>
            <person name="Church G.M."/>
            <person name="Richardson P."/>
            <person name="Chisholm S.W."/>
        </authorList>
    </citation>
    <scope>NUCLEOTIDE SEQUENCE [LARGE SCALE GENOMIC DNA]</scope>
    <source>
        <strain>MIT 9303</strain>
    </source>
</reference>